<name>SYP_STRU0</name>
<gene>
    <name evidence="1" type="primary">proS</name>
    <name type="ordered locus">SUB0255</name>
</gene>
<feature type="chain" id="PRO_1000185515" description="Proline--tRNA ligase">
    <location>
        <begin position="1"/>
        <end position="618"/>
    </location>
</feature>
<keyword id="KW-0030">Aminoacyl-tRNA synthetase</keyword>
<keyword id="KW-0067">ATP-binding</keyword>
<keyword id="KW-0963">Cytoplasm</keyword>
<keyword id="KW-0436">Ligase</keyword>
<keyword id="KW-0547">Nucleotide-binding</keyword>
<keyword id="KW-0648">Protein biosynthesis</keyword>
<keyword id="KW-1185">Reference proteome</keyword>
<proteinExistence type="inferred from homology"/>
<sequence>MKQSKMLIPTLREMPSDAQVISHALMMRAGYVRQVSAGIYAYLPLANRTIEKLKTIMRQEFDKIGAVEMLAPALLTADLWRESGRYETYGDDLYKLKNRESSDFILGPTHEETFTTLVRDAVKSYKQLPLNLYQIQAKYRDEKRPRNGLLRTREFIMKDGYSFHQNYEDLDVTYEDYRKAYEAIFTRSGLEFKGIIGDGGAMGGKDSQEFMAITPERTDLNRWLVLDKSIPSLSDIPEDVLEEIKKELASWLISGEDTIAYSSESSYAANLEMASNAFSPTTKVAVAEDLKEVATPDCKTIDQVADFLNISAETTIKTLLFIADEKPVVALLVGNDQVNDVKLKNYLGADFLDPATEEEAFQVFGAHFGSLGPVNLPDSVRIIADRNVQNLANAVSGANKDGFHLTGVNPERDFKAEFVDIREVKEGEASPDGHGHLQFARGIEVGHIFKLGTRYSDSLGANILDENGKSIPIVMGCYGIGVSRILSAVIEQHARLFVSKTPKGEYRYSWGINFPKELAPFDIHLITVNTKDEEAQTLTDKLEKELMTKGYEVLTDDRNERVGSKFSDSDLIGLPIRITVGKKASEGIVEIKIKASGDSIEVNAENVIETLEILTKDH</sequence>
<reference key="1">
    <citation type="journal article" date="2009" name="BMC Genomics">
        <title>Evidence for niche adaptation in the genome of the bovine pathogen Streptococcus uberis.</title>
        <authorList>
            <person name="Ward P.N."/>
            <person name="Holden M.T.G."/>
            <person name="Leigh J.A."/>
            <person name="Lennard N."/>
            <person name="Bignell A."/>
            <person name="Barron A."/>
            <person name="Clark L."/>
            <person name="Quail M.A."/>
            <person name="Woodward J."/>
            <person name="Barrell B.G."/>
            <person name="Egan S.A."/>
            <person name="Field T.R."/>
            <person name="Maskell D."/>
            <person name="Kehoe M."/>
            <person name="Dowson C.G."/>
            <person name="Chanter N."/>
            <person name="Whatmore A.M."/>
            <person name="Bentley S.D."/>
            <person name="Parkhill J."/>
        </authorList>
    </citation>
    <scope>NUCLEOTIDE SEQUENCE [LARGE SCALE GENOMIC DNA]</scope>
    <source>
        <strain>ATCC BAA-854 / 0140J</strain>
    </source>
</reference>
<comment type="function">
    <text evidence="1">Catalyzes the attachment of proline to tRNA(Pro) in a two-step reaction: proline is first activated by ATP to form Pro-AMP and then transferred to the acceptor end of tRNA(Pro). As ProRS can inadvertently accommodate and process non-cognate amino acids such as alanine and cysteine, to avoid such errors it has two additional distinct editing activities against alanine. One activity is designated as 'pretransfer' editing and involves the tRNA(Pro)-independent hydrolysis of activated Ala-AMP. The other activity is designated 'posttransfer' editing and involves deacylation of mischarged Ala-tRNA(Pro). The misacylated Cys-tRNA(Pro) is not edited by ProRS.</text>
</comment>
<comment type="catalytic activity">
    <reaction evidence="1">
        <text>tRNA(Pro) + L-proline + ATP = L-prolyl-tRNA(Pro) + AMP + diphosphate</text>
        <dbReference type="Rhea" id="RHEA:14305"/>
        <dbReference type="Rhea" id="RHEA-COMP:9700"/>
        <dbReference type="Rhea" id="RHEA-COMP:9702"/>
        <dbReference type="ChEBI" id="CHEBI:30616"/>
        <dbReference type="ChEBI" id="CHEBI:33019"/>
        <dbReference type="ChEBI" id="CHEBI:60039"/>
        <dbReference type="ChEBI" id="CHEBI:78442"/>
        <dbReference type="ChEBI" id="CHEBI:78532"/>
        <dbReference type="ChEBI" id="CHEBI:456215"/>
        <dbReference type="EC" id="6.1.1.15"/>
    </reaction>
</comment>
<comment type="subunit">
    <text evidence="1">Homodimer.</text>
</comment>
<comment type="subcellular location">
    <subcellularLocation>
        <location evidence="1">Cytoplasm</location>
    </subcellularLocation>
</comment>
<comment type="domain">
    <text evidence="1">Consists of three domains: the N-terminal catalytic domain, the editing domain and the C-terminal anticodon-binding domain.</text>
</comment>
<comment type="similarity">
    <text evidence="1">Belongs to the class-II aminoacyl-tRNA synthetase family. ProS type 1 subfamily.</text>
</comment>
<protein>
    <recommendedName>
        <fullName evidence="1">Proline--tRNA ligase</fullName>
        <ecNumber evidence="1">6.1.1.15</ecNumber>
    </recommendedName>
    <alternativeName>
        <fullName evidence="1">Prolyl-tRNA synthetase</fullName>
        <shortName evidence="1">ProRS</shortName>
    </alternativeName>
</protein>
<accession>B9DTD1</accession>
<dbReference type="EC" id="6.1.1.15" evidence="1"/>
<dbReference type="EMBL" id="AM946015">
    <property type="protein sequence ID" value="CAR40772.1"/>
    <property type="molecule type" value="Genomic_DNA"/>
</dbReference>
<dbReference type="RefSeq" id="WP_012657804.1">
    <property type="nucleotide sequence ID" value="NC_012004.1"/>
</dbReference>
<dbReference type="SMR" id="B9DTD1"/>
<dbReference type="STRING" id="218495.SUB0255"/>
<dbReference type="KEGG" id="sub:SUB0255"/>
<dbReference type="eggNOG" id="COG0442">
    <property type="taxonomic scope" value="Bacteria"/>
</dbReference>
<dbReference type="HOGENOM" id="CLU_016739_0_0_9"/>
<dbReference type="OrthoDB" id="9809052at2"/>
<dbReference type="Proteomes" id="UP000000449">
    <property type="component" value="Chromosome"/>
</dbReference>
<dbReference type="GO" id="GO:0005829">
    <property type="term" value="C:cytosol"/>
    <property type="evidence" value="ECO:0007669"/>
    <property type="project" value="TreeGrafter"/>
</dbReference>
<dbReference type="GO" id="GO:0002161">
    <property type="term" value="F:aminoacyl-tRNA deacylase activity"/>
    <property type="evidence" value="ECO:0007669"/>
    <property type="project" value="InterPro"/>
</dbReference>
<dbReference type="GO" id="GO:0005524">
    <property type="term" value="F:ATP binding"/>
    <property type="evidence" value="ECO:0007669"/>
    <property type="project" value="UniProtKB-UniRule"/>
</dbReference>
<dbReference type="GO" id="GO:0140096">
    <property type="term" value="F:catalytic activity, acting on a protein"/>
    <property type="evidence" value="ECO:0007669"/>
    <property type="project" value="UniProtKB-ARBA"/>
</dbReference>
<dbReference type="GO" id="GO:0004827">
    <property type="term" value="F:proline-tRNA ligase activity"/>
    <property type="evidence" value="ECO:0007669"/>
    <property type="project" value="UniProtKB-UniRule"/>
</dbReference>
<dbReference type="GO" id="GO:0016740">
    <property type="term" value="F:transferase activity"/>
    <property type="evidence" value="ECO:0007669"/>
    <property type="project" value="UniProtKB-ARBA"/>
</dbReference>
<dbReference type="GO" id="GO:0006433">
    <property type="term" value="P:prolyl-tRNA aminoacylation"/>
    <property type="evidence" value="ECO:0007669"/>
    <property type="project" value="UniProtKB-UniRule"/>
</dbReference>
<dbReference type="CDD" id="cd04334">
    <property type="entry name" value="ProRS-INS"/>
    <property type="match status" value="1"/>
</dbReference>
<dbReference type="CDD" id="cd00861">
    <property type="entry name" value="ProRS_anticodon_short"/>
    <property type="match status" value="1"/>
</dbReference>
<dbReference type="FunFam" id="3.40.50.800:FF:000011">
    <property type="entry name" value="Proline--tRNA ligase"/>
    <property type="match status" value="1"/>
</dbReference>
<dbReference type="Gene3D" id="3.40.50.800">
    <property type="entry name" value="Anticodon-binding domain"/>
    <property type="match status" value="1"/>
</dbReference>
<dbReference type="Gene3D" id="3.30.930.10">
    <property type="entry name" value="Bira Bifunctional Protein, Domain 2"/>
    <property type="match status" value="2"/>
</dbReference>
<dbReference type="Gene3D" id="3.90.960.10">
    <property type="entry name" value="YbaK/aminoacyl-tRNA synthetase-associated domain"/>
    <property type="match status" value="1"/>
</dbReference>
<dbReference type="HAMAP" id="MF_01569">
    <property type="entry name" value="Pro_tRNA_synth_type1"/>
    <property type="match status" value="1"/>
</dbReference>
<dbReference type="InterPro" id="IPR002314">
    <property type="entry name" value="aa-tRNA-synt_IIb"/>
</dbReference>
<dbReference type="InterPro" id="IPR006195">
    <property type="entry name" value="aa-tRNA-synth_II"/>
</dbReference>
<dbReference type="InterPro" id="IPR045864">
    <property type="entry name" value="aa-tRNA-synth_II/BPL/LPL"/>
</dbReference>
<dbReference type="InterPro" id="IPR004154">
    <property type="entry name" value="Anticodon-bd"/>
</dbReference>
<dbReference type="InterPro" id="IPR036621">
    <property type="entry name" value="Anticodon-bd_dom_sf"/>
</dbReference>
<dbReference type="InterPro" id="IPR002316">
    <property type="entry name" value="Pro-tRNA-ligase_IIa"/>
</dbReference>
<dbReference type="InterPro" id="IPR004500">
    <property type="entry name" value="Pro-tRNA-synth_IIa_bac-type"/>
</dbReference>
<dbReference type="InterPro" id="IPR023717">
    <property type="entry name" value="Pro-tRNA-Synthase_IIa_type1"/>
</dbReference>
<dbReference type="InterPro" id="IPR050062">
    <property type="entry name" value="Pro-tRNA_synthetase"/>
</dbReference>
<dbReference type="InterPro" id="IPR044140">
    <property type="entry name" value="ProRS_anticodon_short"/>
</dbReference>
<dbReference type="InterPro" id="IPR036754">
    <property type="entry name" value="YbaK/aa-tRNA-synt-asso_dom_sf"/>
</dbReference>
<dbReference type="InterPro" id="IPR007214">
    <property type="entry name" value="YbaK/aa-tRNA-synth-assoc-dom"/>
</dbReference>
<dbReference type="NCBIfam" id="NF006625">
    <property type="entry name" value="PRK09194.1"/>
    <property type="match status" value="1"/>
</dbReference>
<dbReference type="NCBIfam" id="TIGR00409">
    <property type="entry name" value="proS_fam_II"/>
    <property type="match status" value="2"/>
</dbReference>
<dbReference type="PANTHER" id="PTHR42753">
    <property type="entry name" value="MITOCHONDRIAL RIBOSOME PROTEIN L39/PROLYL-TRNA LIGASE FAMILY MEMBER"/>
    <property type="match status" value="1"/>
</dbReference>
<dbReference type="PANTHER" id="PTHR42753:SF2">
    <property type="entry name" value="PROLINE--TRNA LIGASE"/>
    <property type="match status" value="1"/>
</dbReference>
<dbReference type="Pfam" id="PF03129">
    <property type="entry name" value="HGTP_anticodon"/>
    <property type="match status" value="1"/>
</dbReference>
<dbReference type="Pfam" id="PF00587">
    <property type="entry name" value="tRNA-synt_2b"/>
    <property type="match status" value="1"/>
</dbReference>
<dbReference type="Pfam" id="PF04073">
    <property type="entry name" value="tRNA_edit"/>
    <property type="match status" value="1"/>
</dbReference>
<dbReference type="PRINTS" id="PR01046">
    <property type="entry name" value="TRNASYNTHPRO"/>
</dbReference>
<dbReference type="SUPFAM" id="SSF52954">
    <property type="entry name" value="Class II aaRS ABD-related"/>
    <property type="match status" value="1"/>
</dbReference>
<dbReference type="SUPFAM" id="SSF55681">
    <property type="entry name" value="Class II aaRS and biotin synthetases"/>
    <property type="match status" value="1"/>
</dbReference>
<dbReference type="SUPFAM" id="SSF55826">
    <property type="entry name" value="YbaK/ProRS associated domain"/>
    <property type="match status" value="1"/>
</dbReference>
<dbReference type="PROSITE" id="PS50862">
    <property type="entry name" value="AA_TRNA_LIGASE_II"/>
    <property type="match status" value="1"/>
</dbReference>
<evidence type="ECO:0000255" key="1">
    <source>
        <dbReference type="HAMAP-Rule" id="MF_01569"/>
    </source>
</evidence>
<organism>
    <name type="scientific">Streptococcus uberis (strain ATCC BAA-854 / 0140J)</name>
    <dbReference type="NCBI Taxonomy" id="218495"/>
    <lineage>
        <taxon>Bacteria</taxon>
        <taxon>Bacillati</taxon>
        <taxon>Bacillota</taxon>
        <taxon>Bacilli</taxon>
        <taxon>Lactobacillales</taxon>
        <taxon>Streptococcaceae</taxon>
        <taxon>Streptococcus</taxon>
    </lineage>
</organism>